<proteinExistence type="inferred from homology"/>
<sequence length="178" mass="19548">MNDREPNQKESKESVNDAVPRARKVDDQQLRVSKIRDGTVIDHLTAGEALNVLAILGIDGSSGEGVSVGMNVISDRLGRKDIVKVEDRELSQSEVDVLAVIAPEATINIIRDYAVVDKKRIERPTAVTGLLFCPNRNCITNANEPINTRFIVLDEGLQCDYCGSIVRESEVPTYLDVA</sequence>
<protein>
    <recommendedName>
        <fullName evidence="1">Aspartate carbamoyltransferase regulatory chain</fullName>
    </recommendedName>
</protein>
<gene>
    <name evidence="1" type="primary">pyrI</name>
    <name type="ordered locus">HQ_1878A</name>
</gene>
<organism>
    <name type="scientific">Haloquadratum walsbyi (strain DSM 16790 / HBSQ001)</name>
    <dbReference type="NCBI Taxonomy" id="362976"/>
    <lineage>
        <taxon>Archaea</taxon>
        <taxon>Methanobacteriati</taxon>
        <taxon>Methanobacteriota</taxon>
        <taxon>Stenosarchaea group</taxon>
        <taxon>Halobacteria</taxon>
        <taxon>Halobacteriales</taxon>
        <taxon>Haloferacaceae</taxon>
        <taxon>Haloquadratum</taxon>
    </lineage>
</organism>
<keyword id="KW-0479">Metal-binding</keyword>
<keyword id="KW-0665">Pyrimidine biosynthesis</keyword>
<keyword id="KW-1185">Reference proteome</keyword>
<keyword id="KW-0862">Zinc</keyword>
<comment type="function">
    <text evidence="1">Involved in allosteric regulation of aspartate carbamoyltransferase.</text>
</comment>
<comment type="cofactor">
    <cofactor evidence="1">
        <name>Zn(2+)</name>
        <dbReference type="ChEBI" id="CHEBI:29105"/>
    </cofactor>
    <text evidence="1">Binds 1 zinc ion per subunit.</text>
</comment>
<comment type="subunit">
    <text evidence="1">Contains catalytic and regulatory chains.</text>
</comment>
<comment type="similarity">
    <text evidence="1">Belongs to the PyrI family.</text>
</comment>
<reference key="1">
    <citation type="journal article" date="2006" name="BMC Genomics">
        <title>The genome of the square archaeon Haloquadratum walsbyi: life at the limits of water activity.</title>
        <authorList>
            <person name="Bolhuis H."/>
            <person name="Palm P."/>
            <person name="Wende A."/>
            <person name="Falb M."/>
            <person name="Rampp M."/>
            <person name="Rodriguez-Valera F."/>
            <person name="Pfeiffer F."/>
            <person name="Oesterhelt D."/>
        </authorList>
    </citation>
    <scope>NUCLEOTIDE SEQUENCE [LARGE SCALE GENOMIC DNA]</scope>
    <source>
        <strain>DSM 16790 / HBSQ001</strain>
    </source>
</reference>
<accession>Q18J06</accession>
<name>PYRI_HALWD</name>
<feature type="chain" id="PRO_0000329097" description="Aspartate carbamoyltransferase regulatory chain">
    <location>
        <begin position="1"/>
        <end position="178"/>
    </location>
</feature>
<feature type="region of interest" description="Disordered" evidence="2">
    <location>
        <begin position="1"/>
        <end position="23"/>
    </location>
</feature>
<feature type="compositionally biased region" description="Basic and acidic residues" evidence="2">
    <location>
        <begin position="1"/>
        <end position="15"/>
    </location>
</feature>
<feature type="binding site" evidence="1">
    <location>
        <position position="133"/>
    </location>
    <ligand>
        <name>Zn(2+)</name>
        <dbReference type="ChEBI" id="CHEBI:29105"/>
    </ligand>
</feature>
<feature type="binding site" evidence="1">
    <location>
        <position position="138"/>
    </location>
    <ligand>
        <name>Zn(2+)</name>
        <dbReference type="ChEBI" id="CHEBI:29105"/>
    </ligand>
</feature>
<feature type="binding site" evidence="1">
    <location>
        <position position="159"/>
    </location>
    <ligand>
        <name>Zn(2+)</name>
        <dbReference type="ChEBI" id="CHEBI:29105"/>
    </ligand>
</feature>
<feature type="binding site" evidence="1">
    <location>
        <position position="162"/>
    </location>
    <ligand>
        <name>Zn(2+)</name>
        <dbReference type="ChEBI" id="CHEBI:29105"/>
    </ligand>
</feature>
<evidence type="ECO:0000255" key="1">
    <source>
        <dbReference type="HAMAP-Rule" id="MF_00002"/>
    </source>
</evidence>
<evidence type="ECO:0000256" key="2">
    <source>
        <dbReference type="SAM" id="MobiDB-lite"/>
    </source>
</evidence>
<dbReference type="EMBL" id="AM180088">
    <property type="protein sequence ID" value="CAJ52006.1"/>
    <property type="molecule type" value="Genomic_DNA"/>
</dbReference>
<dbReference type="SMR" id="Q18J06"/>
<dbReference type="STRING" id="362976.HQ_1878A"/>
<dbReference type="KEGG" id="hwa:HQ_1878A"/>
<dbReference type="eggNOG" id="arCOG04229">
    <property type="taxonomic scope" value="Archaea"/>
</dbReference>
<dbReference type="HOGENOM" id="CLU_128576_0_0_2"/>
<dbReference type="Proteomes" id="UP000001975">
    <property type="component" value="Chromosome"/>
</dbReference>
<dbReference type="GO" id="GO:0009347">
    <property type="term" value="C:aspartate carbamoyltransferase complex"/>
    <property type="evidence" value="ECO:0007669"/>
    <property type="project" value="InterPro"/>
</dbReference>
<dbReference type="GO" id="GO:0046872">
    <property type="term" value="F:metal ion binding"/>
    <property type="evidence" value="ECO:0007669"/>
    <property type="project" value="UniProtKB-KW"/>
</dbReference>
<dbReference type="GO" id="GO:0006207">
    <property type="term" value="P:'de novo' pyrimidine nucleobase biosynthetic process"/>
    <property type="evidence" value="ECO:0007669"/>
    <property type="project" value="InterPro"/>
</dbReference>
<dbReference type="GO" id="GO:0006221">
    <property type="term" value="P:pyrimidine nucleotide biosynthetic process"/>
    <property type="evidence" value="ECO:0007669"/>
    <property type="project" value="UniProtKB-UniRule"/>
</dbReference>
<dbReference type="Gene3D" id="2.30.30.20">
    <property type="entry name" value="Aspartate carbamoyltransferase regulatory subunit, C-terminal domain"/>
    <property type="match status" value="1"/>
</dbReference>
<dbReference type="Gene3D" id="3.30.70.140">
    <property type="entry name" value="Aspartate carbamoyltransferase regulatory subunit, N-terminal domain"/>
    <property type="match status" value="1"/>
</dbReference>
<dbReference type="HAMAP" id="MF_00002">
    <property type="entry name" value="Asp_carb_tr_reg"/>
    <property type="match status" value="1"/>
</dbReference>
<dbReference type="InterPro" id="IPR020545">
    <property type="entry name" value="Asp_carbamoyltransf_reg_N"/>
</dbReference>
<dbReference type="InterPro" id="IPR002801">
    <property type="entry name" value="Asp_carbamoylTrfase_reg"/>
</dbReference>
<dbReference type="InterPro" id="IPR020542">
    <property type="entry name" value="Asp_carbamoyltrfase_reg_C"/>
</dbReference>
<dbReference type="InterPro" id="IPR036792">
    <property type="entry name" value="Asp_carbatrfase_reg_C_sf"/>
</dbReference>
<dbReference type="InterPro" id="IPR036793">
    <property type="entry name" value="Asp_carbatrfase_reg_N_sf"/>
</dbReference>
<dbReference type="NCBIfam" id="TIGR00240">
    <property type="entry name" value="ATCase_reg"/>
    <property type="match status" value="1"/>
</dbReference>
<dbReference type="PANTHER" id="PTHR35805">
    <property type="entry name" value="ASPARTATE CARBAMOYLTRANSFERASE REGULATORY CHAIN"/>
    <property type="match status" value="1"/>
</dbReference>
<dbReference type="PANTHER" id="PTHR35805:SF1">
    <property type="entry name" value="ASPARTATE CARBAMOYLTRANSFERASE REGULATORY CHAIN"/>
    <property type="match status" value="1"/>
</dbReference>
<dbReference type="Pfam" id="PF01948">
    <property type="entry name" value="PyrI"/>
    <property type="match status" value="1"/>
</dbReference>
<dbReference type="Pfam" id="PF02748">
    <property type="entry name" value="PyrI_C"/>
    <property type="match status" value="1"/>
</dbReference>
<dbReference type="SUPFAM" id="SSF57825">
    <property type="entry name" value="Aspartate carbamoyltransferase, Regulatory-chain, C-terminal domain"/>
    <property type="match status" value="1"/>
</dbReference>
<dbReference type="SUPFAM" id="SSF54893">
    <property type="entry name" value="Aspartate carbamoyltransferase, Regulatory-chain, N-terminal domain"/>
    <property type="match status" value="1"/>
</dbReference>